<organism>
    <name type="scientific">Human papillomavirus type 6b</name>
    <dbReference type="NCBI Taxonomy" id="10600"/>
    <lineage>
        <taxon>Viruses</taxon>
        <taxon>Monodnaviria</taxon>
        <taxon>Shotokuvirae</taxon>
        <taxon>Cossaviricota</taxon>
        <taxon>Papovaviricetes</taxon>
        <taxon>Zurhausenvirales</taxon>
        <taxon>Papillomaviridae</taxon>
        <taxon>Firstpapillomavirinae</taxon>
        <taxon>Alphapapillomavirus</taxon>
        <taxon>Alphapapillomavirus 10</taxon>
    </lineage>
</organism>
<evidence type="ECO:0000255" key="1">
    <source>
        <dbReference type="HAMAP-Rule" id="MF_04002"/>
    </source>
</evidence>
<evidence type="ECO:0000256" key="2">
    <source>
        <dbReference type="SAM" id="MobiDB-lite"/>
    </source>
</evidence>
<proteinExistence type="inferred from homology"/>
<name>VL1_HPV6B</name>
<reference key="1">
    <citation type="journal article" date="1983" name="EMBO J.">
        <title>DNA sequence and genome organization of genital human papillomavirus type 6b.</title>
        <authorList>
            <person name="Schwarz E."/>
            <person name="Durst M."/>
            <person name="Demankowski C."/>
            <person name="Lattermann O."/>
            <person name="Zech R."/>
            <person name="Wolfsperger E."/>
            <person name="Suhai S."/>
            <person name="zur Hausen H."/>
        </authorList>
    </citation>
    <scope>NUCLEOTIDE SEQUENCE [GENOMIC DNA]</scope>
</reference>
<protein>
    <recommendedName>
        <fullName evidence="1">Major capsid protein L1</fullName>
    </recommendedName>
</protein>
<organismHost>
    <name type="scientific">Homo sapiens</name>
    <name type="common">Human</name>
    <dbReference type="NCBI Taxonomy" id="9606"/>
</organismHost>
<comment type="function">
    <text evidence="1">Forms an icosahedral capsid with a T=7 symmetry and a 50 nm diameter. The capsid is composed of 72 pentamers linked to each other by disulfide bonds and associated with L2 proteins. Binds to heparan sulfate proteoglycans on cell surface of basal layer keratinocytes to provide initial virion attachment. This binding mediates a conformational change in the virus capsid that facilitates efficient infection. The virion enters the host cell via endocytosis. During virus trafficking, L1 protein dissociates from the viral DNA and the genomic DNA is released to the host nucleus. The virion assembly takes place within the cell nucleus. Encapsulates the genomic DNA together with protein L2.</text>
</comment>
<comment type="subunit">
    <text evidence="1">Self-assembles into homopentamers. The capsid has an icosahedral symmetry and consists of 72 capsomers, with each capsomer being a pentamer of L1. Interacts with the minor capsid protein L2; this interaction is necessary for viral genome encapsidation. Interacts with protein E2; this interaction enhances E2-dependent replication and transcription activation.</text>
</comment>
<comment type="subcellular location">
    <subcellularLocation>
        <location evidence="1">Virion</location>
    </subcellularLocation>
    <subcellularLocation>
        <location evidence="1">Host nucleus</location>
    </subcellularLocation>
</comment>
<comment type="similarity">
    <text evidence="1">Belongs to the papillomaviridae L1 protein family.</text>
</comment>
<feature type="chain" id="PRO_0000133490" description="Major capsid protein L1">
    <location>
        <begin position="1"/>
        <end position="500"/>
    </location>
</feature>
<feature type="region of interest" description="Disordered" evidence="2">
    <location>
        <begin position="475"/>
        <end position="500"/>
    </location>
</feature>
<feature type="compositionally biased region" description="Low complexity" evidence="2">
    <location>
        <begin position="480"/>
        <end position="490"/>
    </location>
</feature>
<feature type="compositionally biased region" description="Basic residues" evidence="2">
    <location>
        <begin position="491"/>
        <end position="500"/>
    </location>
</feature>
<feature type="disulfide bond" description="Interchain (with C-423)" evidence="1">
    <location>
        <position position="171"/>
    </location>
</feature>
<feature type="disulfide bond" description="Interchain (with C-171)" evidence="1">
    <location>
        <position position="423"/>
    </location>
</feature>
<sequence>MWRPSDSTVYVPPPNPVSKVVATDAYVTRTNIFYHASSSRLLAVGHPYFSIKRANKTVVPKVSGYQYRVFKVVLPDPNKFALPDSSLFDPTTQRLVWACTGLEVGRGQPLGVGVSGHPFLNKYDDVENSGSGGNPGQDNRVNVGMDYKQTQLCMVGCAPPLGEHWGKGKQCTNTPVQAGDCPPLELITSVIQDGDMVDTGFGAMNFADLQTNKSDVPIDICGTTCKYPDYLQMAADPYGDRLFFFLRKEQMFARHFFNRAGEVGEPVPDTLIIKGSGNRTSVGSSIYVNTPSGSLVSSEAQLFNKPYWLQKAQGHNNGICWGNQLFVTVVDTTRSTNMTLCASVTTSSTYTNSDYKEYMRHVEEYDLQFIFQLCSITLSAEVMAYIHTMNPSVLEDWNFGLSPPPNGTLEDTYRYVQSQAITCQKPTPEKEKPDPYKNLSFWEVNLKEKFSSELDQYPLGRKFLLQSGYRGRSSIRTGVKRPAVSKASAAPKRKRAKTKR</sequence>
<dbReference type="EMBL" id="X00203">
    <property type="protein sequence ID" value="CAA25026.1"/>
    <property type="molecule type" value="Genomic_DNA"/>
</dbReference>
<dbReference type="PIR" id="A03638">
    <property type="entry name" value="P1WL6"/>
</dbReference>
<dbReference type="RefSeq" id="NP_040304.1">
    <property type="nucleotide sequence ID" value="NC_001355.1"/>
</dbReference>
<dbReference type="SMR" id="P69899"/>
<dbReference type="GeneID" id="1489370"/>
<dbReference type="KEGG" id="vg:1489370"/>
<dbReference type="OrthoDB" id="5037at10239"/>
<dbReference type="Proteomes" id="UP000007676">
    <property type="component" value="Genome"/>
</dbReference>
<dbReference type="GO" id="GO:0042025">
    <property type="term" value="C:host cell nucleus"/>
    <property type="evidence" value="ECO:0007669"/>
    <property type="project" value="UniProtKB-SubCell"/>
</dbReference>
<dbReference type="GO" id="GO:0039620">
    <property type="term" value="C:T=7 icosahedral viral capsid"/>
    <property type="evidence" value="ECO:0007669"/>
    <property type="project" value="UniProtKB-UniRule"/>
</dbReference>
<dbReference type="GO" id="GO:0005198">
    <property type="term" value="F:structural molecule activity"/>
    <property type="evidence" value="ECO:0007669"/>
    <property type="project" value="UniProtKB-UniRule"/>
</dbReference>
<dbReference type="GO" id="GO:0075509">
    <property type="term" value="P:endocytosis involved in viral entry into host cell"/>
    <property type="evidence" value="ECO:0007669"/>
    <property type="project" value="UniProtKB-KW"/>
</dbReference>
<dbReference type="GO" id="GO:0019062">
    <property type="term" value="P:virion attachment to host cell"/>
    <property type="evidence" value="ECO:0007669"/>
    <property type="project" value="UniProtKB-UniRule"/>
</dbReference>
<dbReference type="Gene3D" id="2.60.175.20">
    <property type="entry name" value="Major capsid L1 (late) superfamily, Papillomavirus"/>
    <property type="match status" value="2"/>
</dbReference>
<dbReference type="HAMAP" id="MF_04002">
    <property type="entry name" value="PPV_L1"/>
    <property type="match status" value="1"/>
</dbReference>
<dbReference type="InterPro" id="IPR002210">
    <property type="entry name" value="Capsid_L1_Papillomavir"/>
</dbReference>
<dbReference type="InterPro" id="IPR036973">
    <property type="entry name" value="Capsid_L1_sf_Papillomavir"/>
</dbReference>
<dbReference type="InterPro" id="IPR011222">
    <property type="entry name" value="dsDNA_vir_gr_I_capsid"/>
</dbReference>
<dbReference type="Pfam" id="PF00500">
    <property type="entry name" value="Late_protein_L1"/>
    <property type="match status" value="1"/>
</dbReference>
<dbReference type="PRINTS" id="PR00865">
    <property type="entry name" value="HPVCAPSIDL1"/>
</dbReference>
<dbReference type="SUPFAM" id="SSF88648">
    <property type="entry name" value="Group I dsDNA viruses"/>
    <property type="match status" value="1"/>
</dbReference>
<accession>P69899</accession>
<accession>P03100</accession>
<keyword id="KW-0167">Capsid protein</keyword>
<keyword id="KW-1015">Disulfide bond</keyword>
<keyword id="KW-1048">Host nucleus</keyword>
<keyword id="KW-0945">Host-virus interaction</keyword>
<keyword id="KW-0426">Late protein</keyword>
<keyword id="KW-1145">T=7 icosahedral capsid protein</keyword>
<keyword id="KW-1161">Viral attachment to host cell</keyword>
<keyword id="KW-1162">Viral penetration into host cytoplasm</keyword>
<keyword id="KW-0946">Virion</keyword>
<keyword id="KW-1164">Virus endocytosis by host</keyword>
<keyword id="KW-1160">Virus entry into host cell</keyword>
<gene>
    <name evidence="1" type="primary">L1</name>
</gene>